<organism>
    <name type="scientific">Homo sapiens</name>
    <name type="common">Human</name>
    <dbReference type="NCBI Taxonomy" id="9606"/>
    <lineage>
        <taxon>Eukaryota</taxon>
        <taxon>Metazoa</taxon>
        <taxon>Chordata</taxon>
        <taxon>Craniata</taxon>
        <taxon>Vertebrata</taxon>
        <taxon>Euteleostomi</taxon>
        <taxon>Mammalia</taxon>
        <taxon>Eutheria</taxon>
        <taxon>Euarchontoglires</taxon>
        <taxon>Primates</taxon>
        <taxon>Haplorrhini</taxon>
        <taxon>Catarrhini</taxon>
        <taxon>Hominidae</taxon>
        <taxon>Homo</taxon>
    </lineage>
</organism>
<keyword id="KW-0025">Alternative splicing</keyword>
<keyword id="KW-0238">DNA-binding</keyword>
<keyword id="KW-0479">Metal-binding</keyword>
<keyword id="KW-0539">Nucleus</keyword>
<keyword id="KW-1267">Proteomics identification</keyword>
<keyword id="KW-1185">Reference proteome</keyword>
<keyword id="KW-0677">Repeat</keyword>
<keyword id="KW-0804">Transcription</keyword>
<keyword id="KW-0805">Transcription regulation</keyword>
<keyword id="KW-0862">Zinc</keyword>
<keyword id="KW-0863">Zinc-finger</keyword>
<evidence type="ECO:0000255" key="1">
    <source>
        <dbReference type="PROSITE-ProRule" id="PRU00042"/>
    </source>
</evidence>
<evidence type="ECO:0000255" key="2">
    <source>
        <dbReference type="PROSITE-ProRule" id="PRU00119"/>
    </source>
</evidence>
<evidence type="ECO:0000303" key="3">
    <source>
    </source>
</evidence>
<evidence type="ECO:0000305" key="4"/>
<protein>
    <recommendedName>
        <fullName>Zinc finger protein 558</fullName>
    </recommendedName>
</protein>
<proteinExistence type="evidence at protein level"/>
<comment type="function">
    <text>May be involved in transcriptional regulation.</text>
</comment>
<comment type="interaction">
    <interactant intactId="EBI-373363">
        <id>Q96NG5</id>
    </interactant>
    <interactant intactId="EBI-750020">
        <id>P49760</id>
        <label>CLK2</label>
    </interactant>
    <organismsDiffer>false</organismsDiffer>
    <experiments>3</experiments>
</comment>
<comment type="interaction">
    <interactant intactId="EBI-373363">
        <id>Q96NG5</id>
    </interactant>
    <interactant intactId="EBI-347804">
        <id>P68400</id>
        <label>CSNK2A1</label>
    </interactant>
    <organismsDiffer>false</organismsDiffer>
    <experiments>3</experiments>
</comment>
<comment type="interaction">
    <interactant intactId="EBI-373363">
        <id>Q96NG5</id>
    </interactant>
    <interactant intactId="EBI-743414">
        <id>O95967</id>
        <label>EFEMP2</label>
    </interactant>
    <organismsDiffer>false</organismsDiffer>
    <experiments>3</experiments>
</comment>
<comment type="interaction">
    <interactant intactId="EBI-373363">
        <id>Q96NG5</id>
    </interactant>
    <interactant intactId="EBI-750700">
        <id>Q8N9N8</id>
        <label>EIF1AD</label>
    </interactant>
    <organismsDiffer>false</organismsDiffer>
    <experiments>3</experiments>
</comment>
<comment type="interaction">
    <interactant intactId="EBI-373363">
        <id>Q96NG5</id>
    </interactant>
    <interactant intactId="EBI-2798865">
        <id>P57764</id>
        <label>GSDMD</label>
    </interactant>
    <organismsDiffer>false</organismsDiffer>
    <experiments>3</experiments>
</comment>
<comment type="interaction">
    <interactant intactId="EBI-373363">
        <id>Q96NG5</id>
    </interactant>
    <interactant intactId="EBI-5460660">
        <id>Q96MH2</id>
        <label>HEXIM2</label>
    </interactant>
    <organismsDiffer>false</organismsDiffer>
    <experiments>3</experiments>
</comment>
<comment type="interaction">
    <interactant intactId="EBI-373363">
        <id>Q96NG5</id>
    </interactant>
    <interactant intactId="EBI-5774346">
        <id>Q8WZA0</id>
        <label>LZIC</label>
    </interactant>
    <organismsDiffer>false</organismsDiffer>
    <experiments>3</experiments>
</comment>
<comment type="interaction">
    <interactant intactId="EBI-373363">
        <id>Q96NG5</id>
    </interactant>
    <interactant intactId="EBI-77889">
        <id>Q9UI95</id>
        <label>MAD2L2</label>
    </interactant>
    <organismsDiffer>false</organismsDiffer>
    <experiments>3</experiments>
</comment>
<comment type="interaction">
    <interactant intactId="EBI-373363">
        <id>Q96NG5</id>
    </interactant>
    <interactant intactId="EBI-1048159">
        <id>P55081</id>
        <label>MFAP1</label>
    </interactant>
    <organismsDiffer>false</organismsDiffer>
    <experiments>3</experiments>
</comment>
<comment type="interaction">
    <interactant intactId="EBI-373363">
        <id>Q96NG5</id>
    </interactant>
    <interactant intactId="EBI-17208936">
        <id>P0CB47</id>
        <label>UBTFL1</label>
    </interactant>
    <organismsDiffer>false</organismsDiffer>
    <experiments>3</experiments>
</comment>
<comment type="subcellular location">
    <subcellularLocation>
        <location evidence="4">Nucleus</location>
    </subcellularLocation>
</comment>
<comment type="alternative products">
    <event type="alternative splicing"/>
    <isoform>
        <id>Q96NG5-1</id>
        <name>1</name>
        <sequence type="displayed"/>
    </isoform>
    <isoform>
        <id>Q96NG5-2</id>
        <name>2</name>
        <sequence type="described" ref="VSP_055963"/>
    </isoform>
</comment>
<comment type="similarity">
    <text evidence="4">Belongs to the krueppel C2H2-type zinc-finger protein family.</text>
</comment>
<dbReference type="EMBL" id="AK055494">
    <property type="protein sequence ID" value="BAB70934.1"/>
    <property type="molecule type" value="mRNA"/>
</dbReference>
<dbReference type="EMBL" id="AK291265">
    <property type="protein sequence ID" value="BAF83954.1"/>
    <property type="molecule type" value="mRNA"/>
</dbReference>
<dbReference type="EMBL" id="AK301664">
    <property type="protein sequence ID" value="BAH13534.1"/>
    <property type="molecule type" value="mRNA"/>
</dbReference>
<dbReference type="EMBL" id="AC008734">
    <property type="status" value="NOT_ANNOTATED_CDS"/>
    <property type="molecule type" value="Genomic_DNA"/>
</dbReference>
<dbReference type="EMBL" id="AC012616">
    <property type="status" value="NOT_ANNOTATED_CDS"/>
    <property type="molecule type" value="Genomic_DNA"/>
</dbReference>
<dbReference type="EMBL" id="CH471106">
    <property type="protein sequence ID" value="EAW83994.1"/>
    <property type="molecule type" value="Genomic_DNA"/>
</dbReference>
<dbReference type="EMBL" id="BC064356">
    <property type="protein sequence ID" value="AAH64356.1"/>
    <property type="molecule type" value="mRNA"/>
</dbReference>
<dbReference type="CCDS" id="CCDS12208.1">
    <molecule id="Q96NG5-1"/>
</dbReference>
<dbReference type="RefSeq" id="NP_001291279.1">
    <molecule id="Q96NG5-2"/>
    <property type="nucleotide sequence ID" value="NM_001304350.2"/>
</dbReference>
<dbReference type="RefSeq" id="NP_653294.1">
    <molecule id="Q96NG5-1"/>
    <property type="nucleotide sequence ID" value="NM_144693.3"/>
</dbReference>
<dbReference type="RefSeq" id="XP_011526005.1">
    <molecule id="Q96NG5-2"/>
    <property type="nucleotide sequence ID" value="XM_011527703.3"/>
</dbReference>
<dbReference type="RefSeq" id="XP_016881859.1">
    <property type="nucleotide sequence ID" value="XM_017026370.1"/>
</dbReference>
<dbReference type="RefSeq" id="XP_016881860.1">
    <property type="nucleotide sequence ID" value="XM_017026371.1"/>
</dbReference>
<dbReference type="RefSeq" id="XP_016881861.1">
    <property type="nucleotide sequence ID" value="XM_017026372.1"/>
</dbReference>
<dbReference type="RefSeq" id="XP_024307154.1">
    <molecule id="Q96NG5-1"/>
    <property type="nucleotide sequence ID" value="XM_024451386.2"/>
</dbReference>
<dbReference type="RefSeq" id="XP_024307155.1">
    <molecule id="Q96NG5-1"/>
    <property type="nucleotide sequence ID" value="XM_024451387.2"/>
</dbReference>
<dbReference type="RefSeq" id="XP_024307156.1">
    <molecule id="Q96NG5-1"/>
    <property type="nucleotide sequence ID" value="XM_024451388.2"/>
</dbReference>
<dbReference type="RefSeq" id="XP_024307157.1">
    <molecule id="Q96NG5-1"/>
    <property type="nucleotide sequence ID" value="XM_024451389.2"/>
</dbReference>
<dbReference type="RefSeq" id="XP_024307158.1">
    <molecule id="Q96NG5-1"/>
    <property type="nucleotide sequence ID" value="XM_024451390.2"/>
</dbReference>
<dbReference type="RefSeq" id="XP_024307159.1">
    <molecule id="Q96NG5-1"/>
    <property type="nucleotide sequence ID" value="XM_024451391.2"/>
</dbReference>
<dbReference type="RefSeq" id="XP_024307161.1">
    <molecule id="Q96NG5-1"/>
    <property type="nucleotide sequence ID" value="XM_024451393.2"/>
</dbReference>
<dbReference type="RefSeq" id="XP_024307162.1">
    <molecule id="Q96NG5-1"/>
    <property type="nucleotide sequence ID" value="XM_024451394.2"/>
</dbReference>
<dbReference type="RefSeq" id="XP_024307163.1">
    <molecule id="Q96NG5-1"/>
    <property type="nucleotide sequence ID" value="XM_024451395.2"/>
</dbReference>
<dbReference type="RefSeq" id="XP_047294224.1">
    <molecule id="Q96NG5-1"/>
    <property type="nucleotide sequence ID" value="XM_047438268.1"/>
</dbReference>
<dbReference type="RefSeq" id="XP_047294225.1">
    <molecule id="Q96NG5-1"/>
    <property type="nucleotide sequence ID" value="XM_047438269.1"/>
</dbReference>
<dbReference type="RefSeq" id="XP_047294226.1">
    <molecule id="Q96NG5-1"/>
    <property type="nucleotide sequence ID" value="XM_047438270.1"/>
</dbReference>
<dbReference type="RefSeq" id="XP_047294227.1">
    <molecule id="Q96NG5-2"/>
    <property type="nucleotide sequence ID" value="XM_047438271.1"/>
</dbReference>
<dbReference type="RefSeq" id="XP_054175961.1">
    <molecule id="Q96NG5-1"/>
    <property type="nucleotide sequence ID" value="XM_054319986.1"/>
</dbReference>
<dbReference type="RefSeq" id="XP_054175962.1">
    <molecule id="Q96NG5-1"/>
    <property type="nucleotide sequence ID" value="XM_054319987.1"/>
</dbReference>
<dbReference type="RefSeq" id="XP_054175963.1">
    <molecule id="Q96NG5-1"/>
    <property type="nucleotide sequence ID" value="XM_054319988.1"/>
</dbReference>
<dbReference type="RefSeq" id="XP_054175964.1">
    <molecule id="Q96NG5-1"/>
    <property type="nucleotide sequence ID" value="XM_054319989.1"/>
</dbReference>
<dbReference type="RefSeq" id="XP_054175965.1">
    <molecule id="Q96NG5-1"/>
    <property type="nucleotide sequence ID" value="XM_054319990.1"/>
</dbReference>
<dbReference type="RefSeq" id="XP_054175966.1">
    <molecule id="Q96NG5-1"/>
    <property type="nucleotide sequence ID" value="XM_054319991.1"/>
</dbReference>
<dbReference type="RefSeq" id="XP_054175967.1">
    <molecule id="Q96NG5-1"/>
    <property type="nucleotide sequence ID" value="XM_054319992.1"/>
</dbReference>
<dbReference type="RefSeq" id="XP_054175968.1">
    <molecule id="Q96NG5-1"/>
    <property type="nucleotide sequence ID" value="XM_054319993.1"/>
</dbReference>
<dbReference type="RefSeq" id="XP_054175969.1">
    <molecule id="Q96NG5-1"/>
    <property type="nucleotide sequence ID" value="XM_054319994.1"/>
</dbReference>
<dbReference type="RefSeq" id="XP_054175970.1">
    <molecule id="Q96NG5-1"/>
    <property type="nucleotide sequence ID" value="XM_054319995.1"/>
</dbReference>
<dbReference type="RefSeq" id="XP_054175971.1">
    <molecule id="Q96NG5-1"/>
    <property type="nucleotide sequence ID" value="XM_054319996.1"/>
</dbReference>
<dbReference type="RefSeq" id="XP_054175972.1">
    <molecule id="Q96NG5-1"/>
    <property type="nucleotide sequence ID" value="XM_054319997.1"/>
</dbReference>
<dbReference type="RefSeq" id="XP_054175973.1">
    <molecule id="Q96NG5-2"/>
    <property type="nucleotide sequence ID" value="XM_054319998.1"/>
</dbReference>
<dbReference type="RefSeq" id="XP_054175974.1">
    <molecule id="Q96NG5-2"/>
    <property type="nucleotide sequence ID" value="XM_054319999.1"/>
</dbReference>
<dbReference type="RefSeq" id="XP_054189209.1">
    <molecule id="Q96NG5-1"/>
    <property type="nucleotide sequence ID" value="XM_054333234.1"/>
</dbReference>
<dbReference type="RefSeq" id="XP_054189210.1">
    <molecule id="Q96NG5-1"/>
    <property type="nucleotide sequence ID" value="XM_054333235.1"/>
</dbReference>
<dbReference type="RefSeq" id="XP_054189211.1">
    <molecule id="Q96NG5-1"/>
    <property type="nucleotide sequence ID" value="XM_054333236.1"/>
</dbReference>
<dbReference type="RefSeq" id="XP_054189212.1">
    <molecule id="Q96NG5-1"/>
    <property type="nucleotide sequence ID" value="XM_054333237.1"/>
</dbReference>
<dbReference type="RefSeq" id="XP_054189213.1">
    <molecule id="Q96NG5-1"/>
    <property type="nucleotide sequence ID" value="XM_054333238.1"/>
</dbReference>
<dbReference type="RefSeq" id="XP_054189214.1">
    <molecule id="Q96NG5-1"/>
    <property type="nucleotide sequence ID" value="XM_054333239.1"/>
</dbReference>
<dbReference type="RefSeq" id="XP_054189215.1">
    <molecule id="Q96NG5-1"/>
    <property type="nucleotide sequence ID" value="XM_054333240.1"/>
</dbReference>
<dbReference type="RefSeq" id="XP_054189216.1">
    <molecule id="Q96NG5-1"/>
    <property type="nucleotide sequence ID" value="XM_054333241.1"/>
</dbReference>
<dbReference type="RefSeq" id="XP_054189217.1">
    <molecule id="Q96NG5-1"/>
    <property type="nucleotide sequence ID" value="XM_054333242.1"/>
</dbReference>
<dbReference type="RefSeq" id="XP_054189218.1">
    <molecule id="Q96NG5-1"/>
    <property type="nucleotide sequence ID" value="XM_054333243.1"/>
</dbReference>
<dbReference type="RefSeq" id="XP_054189219.1">
    <molecule id="Q96NG5-1"/>
    <property type="nucleotide sequence ID" value="XM_054333244.1"/>
</dbReference>
<dbReference type="RefSeq" id="XP_054189220.1">
    <molecule id="Q96NG5-1"/>
    <property type="nucleotide sequence ID" value="XM_054333245.1"/>
</dbReference>
<dbReference type="RefSeq" id="XP_054189221.1">
    <molecule id="Q96NG5-2"/>
    <property type="nucleotide sequence ID" value="XM_054333246.1"/>
</dbReference>
<dbReference type="RefSeq" id="XP_054189222.1">
    <molecule id="Q96NG5-2"/>
    <property type="nucleotide sequence ID" value="XM_054333247.1"/>
</dbReference>
<dbReference type="SMR" id="Q96NG5"/>
<dbReference type="BioGRID" id="127124">
    <property type="interactions" value="27"/>
</dbReference>
<dbReference type="FunCoup" id="Q96NG5">
    <property type="interactions" value="34"/>
</dbReference>
<dbReference type="IntAct" id="Q96NG5">
    <property type="interactions" value="21"/>
</dbReference>
<dbReference type="STRING" id="9606.ENSP00000471277"/>
<dbReference type="iPTMnet" id="Q96NG5"/>
<dbReference type="PhosphoSitePlus" id="Q96NG5"/>
<dbReference type="BioMuta" id="ZNF558"/>
<dbReference type="DMDM" id="68566225"/>
<dbReference type="jPOST" id="Q96NG5"/>
<dbReference type="MassIVE" id="Q96NG5"/>
<dbReference type="PaxDb" id="9606-ENSP00000471277"/>
<dbReference type="PeptideAtlas" id="Q96NG5"/>
<dbReference type="ProteomicsDB" id="77510">
    <molecule id="Q96NG5-1"/>
</dbReference>
<dbReference type="TopDownProteomics" id="Q96NG5-1">
    <molecule id="Q96NG5-1"/>
</dbReference>
<dbReference type="Antibodypedia" id="844">
    <property type="antibodies" value="107 antibodies from 19 providers"/>
</dbReference>
<dbReference type="DNASU" id="148156"/>
<dbReference type="Ensembl" id="ENST00000301475.1">
    <molecule id="Q96NG5-1"/>
    <property type="protein sequence ID" value="ENSP00000301475.1"/>
    <property type="gene ID" value="ENSG00000167785.9"/>
</dbReference>
<dbReference type="Ensembl" id="ENST00000601372.6">
    <molecule id="Q96NG5-1"/>
    <property type="protein sequence ID" value="ENSP00000471277.1"/>
    <property type="gene ID" value="ENSG00000167785.9"/>
</dbReference>
<dbReference type="Ensembl" id="ENST00000708541.1">
    <molecule id="Q96NG5-1"/>
    <property type="protein sequence ID" value="ENSP00000517273.1"/>
    <property type="gene ID" value="ENSG00000291737.1"/>
</dbReference>
<dbReference type="Ensembl" id="ENST00000708542.1">
    <molecule id="Q96NG5-1"/>
    <property type="protein sequence ID" value="ENSP00000517274.1"/>
    <property type="gene ID" value="ENSG00000291737.1"/>
</dbReference>
<dbReference type="GeneID" id="148156"/>
<dbReference type="KEGG" id="hsa:148156"/>
<dbReference type="MANE-Select" id="ENST00000601372.6">
    <property type="protein sequence ID" value="ENSP00000471277.1"/>
    <property type="RefSeq nucleotide sequence ID" value="NM_144693.3"/>
    <property type="RefSeq protein sequence ID" value="NP_653294.1"/>
</dbReference>
<dbReference type="UCSC" id="uc002mkn.1">
    <molecule id="Q96NG5-1"/>
    <property type="organism name" value="human"/>
</dbReference>
<dbReference type="AGR" id="HGNC:26422"/>
<dbReference type="CTD" id="148156"/>
<dbReference type="DisGeNET" id="148156"/>
<dbReference type="GeneCards" id="ZNF558"/>
<dbReference type="HGNC" id="HGNC:26422">
    <property type="gene designation" value="ZNF558"/>
</dbReference>
<dbReference type="HPA" id="ENSG00000167785">
    <property type="expression patterns" value="Low tissue specificity"/>
</dbReference>
<dbReference type="neXtProt" id="NX_Q96NG5"/>
<dbReference type="OpenTargets" id="ENSG00000167785"/>
<dbReference type="PharmGKB" id="PA134899314"/>
<dbReference type="VEuPathDB" id="HostDB:ENSG00000167785"/>
<dbReference type="eggNOG" id="KOG1721">
    <property type="taxonomic scope" value="Eukaryota"/>
</dbReference>
<dbReference type="GeneTree" id="ENSGT00940000160844"/>
<dbReference type="HOGENOM" id="CLU_002678_44_17_1"/>
<dbReference type="InParanoid" id="Q96NG5"/>
<dbReference type="OMA" id="KINECNQ"/>
<dbReference type="OrthoDB" id="40579at2759"/>
<dbReference type="PAN-GO" id="Q96NG5">
    <property type="GO annotations" value="3 GO annotations based on evolutionary models"/>
</dbReference>
<dbReference type="PhylomeDB" id="Q96NG5"/>
<dbReference type="TreeFam" id="TF337055"/>
<dbReference type="PathwayCommons" id="Q96NG5"/>
<dbReference type="Reactome" id="R-HSA-212436">
    <property type="pathway name" value="Generic Transcription Pathway"/>
</dbReference>
<dbReference type="SignaLink" id="Q96NG5"/>
<dbReference type="BioGRID-ORCS" id="148156">
    <property type="hits" value="12 hits in 1174 CRISPR screens"/>
</dbReference>
<dbReference type="ChiTaRS" id="ZNF558">
    <property type="organism name" value="human"/>
</dbReference>
<dbReference type="GenomeRNAi" id="148156"/>
<dbReference type="Pharos" id="Q96NG5">
    <property type="development level" value="Tdark"/>
</dbReference>
<dbReference type="PRO" id="PR:Q96NG5"/>
<dbReference type="Proteomes" id="UP000005640">
    <property type="component" value="Chromosome 19"/>
</dbReference>
<dbReference type="RNAct" id="Q96NG5">
    <property type="molecule type" value="protein"/>
</dbReference>
<dbReference type="Bgee" id="ENSG00000167785">
    <property type="expression patterns" value="Expressed in body of uterus and 163 other cell types or tissues"/>
</dbReference>
<dbReference type="GO" id="GO:0005634">
    <property type="term" value="C:nucleus"/>
    <property type="evidence" value="ECO:0000318"/>
    <property type="project" value="GO_Central"/>
</dbReference>
<dbReference type="GO" id="GO:0000981">
    <property type="term" value="F:DNA-binding transcription factor activity, RNA polymerase II-specific"/>
    <property type="evidence" value="ECO:0000318"/>
    <property type="project" value="GO_Central"/>
</dbReference>
<dbReference type="GO" id="GO:0000977">
    <property type="term" value="F:RNA polymerase II transcription regulatory region sequence-specific DNA binding"/>
    <property type="evidence" value="ECO:0000318"/>
    <property type="project" value="GO_Central"/>
</dbReference>
<dbReference type="GO" id="GO:0008270">
    <property type="term" value="F:zinc ion binding"/>
    <property type="evidence" value="ECO:0007669"/>
    <property type="project" value="UniProtKB-KW"/>
</dbReference>
<dbReference type="GO" id="GO:0006357">
    <property type="term" value="P:regulation of transcription by RNA polymerase II"/>
    <property type="evidence" value="ECO:0000318"/>
    <property type="project" value="GO_Central"/>
</dbReference>
<dbReference type="CDD" id="cd07765">
    <property type="entry name" value="KRAB_A-box"/>
    <property type="match status" value="1"/>
</dbReference>
<dbReference type="FunFam" id="3.30.160.60:FF:002254">
    <property type="entry name" value="Zinc finger protein 540"/>
    <property type="match status" value="4"/>
</dbReference>
<dbReference type="FunFam" id="3.30.160.60:FF:000052">
    <property type="entry name" value="zinc finger protein 546 isoform X1"/>
    <property type="match status" value="1"/>
</dbReference>
<dbReference type="FunFam" id="3.30.160.60:FF:000281">
    <property type="entry name" value="Zinc finger protein 558 isoform X1"/>
    <property type="match status" value="2"/>
</dbReference>
<dbReference type="FunFam" id="3.30.160.60:FF:001905">
    <property type="entry name" value="zinc finger protein 558 isoform X1"/>
    <property type="match status" value="1"/>
</dbReference>
<dbReference type="FunFam" id="3.30.160.60:FF:000899">
    <property type="entry name" value="zinc finger protein 558 isoform X2"/>
    <property type="match status" value="1"/>
</dbReference>
<dbReference type="Gene3D" id="6.10.140.140">
    <property type="match status" value="1"/>
</dbReference>
<dbReference type="Gene3D" id="3.30.160.60">
    <property type="entry name" value="Classic Zinc Finger"/>
    <property type="match status" value="9"/>
</dbReference>
<dbReference type="InterPro" id="IPR001909">
    <property type="entry name" value="KRAB"/>
</dbReference>
<dbReference type="InterPro" id="IPR036051">
    <property type="entry name" value="KRAB_dom_sf"/>
</dbReference>
<dbReference type="InterPro" id="IPR036236">
    <property type="entry name" value="Znf_C2H2_sf"/>
</dbReference>
<dbReference type="InterPro" id="IPR013087">
    <property type="entry name" value="Znf_C2H2_type"/>
</dbReference>
<dbReference type="PANTHER" id="PTHR24393">
    <property type="entry name" value="ZINC FINGER PROTEIN"/>
    <property type="match status" value="1"/>
</dbReference>
<dbReference type="PANTHER" id="PTHR24393:SF100">
    <property type="entry name" value="ZINC FINGER PROTEIN-RELATED"/>
    <property type="match status" value="1"/>
</dbReference>
<dbReference type="Pfam" id="PF01352">
    <property type="entry name" value="KRAB"/>
    <property type="match status" value="1"/>
</dbReference>
<dbReference type="Pfam" id="PF00096">
    <property type="entry name" value="zf-C2H2"/>
    <property type="match status" value="5"/>
</dbReference>
<dbReference type="Pfam" id="PF13912">
    <property type="entry name" value="zf-C2H2_6"/>
    <property type="match status" value="1"/>
</dbReference>
<dbReference type="Pfam" id="PF13465">
    <property type="entry name" value="zf-H2C2_2"/>
    <property type="match status" value="1"/>
</dbReference>
<dbReference type="SMART" id="SM00349">
    <property type="entry name" value="KRAB"/>
    <property type="match status" value="1"/>
</dbReference>
<dbReference type="SMART" id="SM00355">
    <property type="entry name" value="ZnF_C2H2"/>
    <property type="match status" value="9"/>
</dbReference>
<dbReference type="SUPFAM" id="SSF57667">
    <property type="entry name" value="beta-beta-alpha zinc fingers"/>
    <property type="match status" value="5"/>
</dbReference>
<dbReference type="SUPFAM" id="SSF109640">
    <property type="entry name" value="KRAB domain (Kruppel-associated box)"/>
    <property type="match status" value="1"/>
</dbReference>
<dbReference type="PROSITE" id="PS50805">
    <property type="entry name" value="KRAB"/>
    <property type="match status" value="1"/>
</dbReference>
<dbReference type="PROSITE" id="PS00028">
    <property type="entry name" value="ZINC_FINGER_C2H2_1"/>
    <property type="match status" value="9"/>
</dbReference>
<dbReference type="PROSITE" id="PS50157">
    <property type="entry name" value="ZINC_FINGER_C2H2_2"/>
    <property type="match status" value="9"/>
</dbReference>
<name>ZN558_HUMAN</name>
<sequence>MAAVILPSTAAPSSLFPASQQKGHTQGGELVNELLTSWLRGLVTFEDVAVEFTQEEWALLDPAQRTLYRDVMLENCRNLASLGCRVNKPSLISQLEQDKKVVTEERGILPSTCPDLETLLKAKWLTPKKNVFRKEQSKGVKTERSHRGVKLNECNQCFKVFSTKSNLTQHKRIHTGEKPYDCSQCGKSFSSRSYLTIHKRIHNGEKPYECNHCGKAFSDPSSLRLHLRIHTGEKPYECNQCFHVFRTSCNLKSHKRIHTGENHHECNQCGKAFSTRSSLTGHNSIHTGEKPYECHDCGKTFRKSSYLTQHVRTHTGEKPYECNECGKSFSSSFSLTVHKRIHTGEKPYECSDCGKAFNNLSAVKKHLRTHTGEKPYECNHCGKSFTSNSYLSVHKRIHNRWI</sequence>
<feature type="chain" id="PRO_0000047648" description="Zinc finger protein 558">
    <location>
        <begin position="1"/>
        <end position="402"/>
    </location>
</feature>
<feature type="domain" description="KRAB" evidence="2">
    <location>
        <begin position="43"/>
        <end position="114"/>
    </location>
</feature>
<feature type="zinc finger region" description="C2H2-type 1" evidence="1">
    <location>
        <begin position="152"/>
        <end position="174"/>
    </location>
</feature>
<feature type="zinc finger region" description="C2H2-type 2" evidence="1">
    <location>
        <begin position="180"/>
        <end position="202"/>
    </location>
</feature>
<feature type="zinc finger region" description="C2H2-type 3" evidence="1">
    <location>
        <begin position="208"/>
        <end position="230"/>
    </location>
</feature>
<feature type="zinc finger region" description="C2H2-type 4" evidence="1">
    <location>
        <begin position="236"/>
        <end position="258"/>
    </location>
</feature>
<feature type="zinc finger region" description="C2H2-type 5" evidence="1">
    <location>
        <begin position="264"/>
        <end position="286"/>
    </location>
</feature>
<feature type="zinc finger region" description="C2H2-type 6" evidence="1">
    <location>
        <begin position="292"/>
        <end position="314"/>
    </location>
</feature>
<feature type="zinc finger region" description="C2H2-type 7" evidence="1">
    <location>
        <begin position="320"/>
        <end position="342"/>
    </location>
</feature>
<feature type="zinc finger region" description="C2H2-type 8" evidence="1">
    <location>
        <begin position="348"/>
        <end position="370"/>
    </location>
</feature>
<feature type="zinc finger region" description="C2H2-type 9" evidence="1">
    <location>
        <begin position="376"/>
        <end position="398"/>
    </location>
</feature>
<feature type="splice variant" id="VSP_055963" description="In isoform 2." evidence="3">
    <location>
        <begin position="1"/>
        <end position="71"/>
    </location>
</feature>
<reference key="1">
    <citation type="journal article" date="2004" name="Nat. Genet.">
        <title>Complete sequencing and characterization of 21,243 full-length human cDNAs.</title>
        <authorList>
            <person name="Ota T."/>
            <person name="Suzuki Y."/>
            <person name="Nishikawa T."/>
            <person name="Otsuki T."/>
            <person name="Sugiyama T."/>
            <person name="Irie R."/>
            <person name="Wakamatsu A."/>
            <person name="Hayashi K."/>
            <person name="Sato H."/>
            <person name="Nagai K."/>
            <person name="Kimura K."/>
            <person name="Makita H."/>
            <person name="Sekine M."/>
            <person name="Obayashi M."/>
            <person name="Nishi T."/>
            <person name="Shibahara T."/>
            <person name="Tanaka T."/>
            <person name="Ishii S."/>
            <person name="Yamamoto J."/>
            <person name="Saito K."/>
            <person name="Kawai Y."/>
            <person name="Isono Y."/>
            <person name="Nakamura Y."/>
            <person name="Nagahari K."/>
            <person name="Murakami K."/>
            <person name="Yasuda T."/>
            <person name="Iwayanagi T."/>
            <person name="Wagatsuma M."/>
            <person name="Shiratori A."/>
            <person name="Sudo H."/>
            <person name="Hosoiri T."/>
            <person name="Kaku Y."/>
            <person name="Kodaira H."/>
            <person name="Kondo H."/>
            <person name="Sugawara M."/>
            <person name="Takahashi M."/>
            <person name="Kanda K."/>
            <person name="Yokoi T."/>
            <person name="Furuya T."/>
            <person name="Kikkawa E."/>
            <person name="Omura Y."/>
            <person name="Abe K."/>
            <person name="Kamihara K."/>
            <person name="Katsuta N."/>
            <person name="Sato K."/>
            <person name="Tanikawa M."/>
            <person name="Yamazaki M."/>
            <person name="Ninomiya K."/>
            <person name="Ishibashi T."/>
            <person name="Yamashita H."/>
            <person name="Murakawa K."/>
            <person name="Fujimori K."/>
            <person name="Tanai H."/>
            <person name="Kimata M."/>
            <person name="Watanabe M."/>
            <person name="Hiraoka S."/>
            <person name="Chiba Y."/>
            <person name="Ishida S."/>
            <person name="Ono Y."/>
            <person name="Takiguchi S."/>
            <person name="Watanabe S."/>
            <person name="Yosida M."/>
            <person name="Hotuta T."/>
            <person name="Kusano J."/>
            <person name="Kanehori K."/>
            <person name="Takahashi-Fujii A."/>
            <person name="Hara H."/>
            <person name="Tanase T.-O."/>
            <person name="Nomura Y."/>
            <person name="Togiya S."/>
            <person name="Komai F."/>
            <person name="Hara R."/>
            <person name="Takeuchi K."/>
            <person name="Arita M."/>
            <person name="Imose N."/>
            <person name="Musashino K."/>
            <person name="Yuuki H."/>
            <person name="Oshima A."/>
            <person name="Sasaki N."/>
            <person name="Aotsuka S."/>
            <person name="Yoshikawa Y."/>
            <person name="Matsunawa H."/>
            <person name="Ichihara T."/>
            <person name="Shiohata N."/>
            <person name="Sano S."/>
            <person name="Moriya S."/>
            <person name="Momiyama H."/>
            <person name="Satoh N."/>
            <person name="Takami S."/>
            <person name="Terashima Y."/>
            <person name="Suzuki O."/>
            <person name="Nakagawa S."/>
            <person name="Senoh A."/>
            <person name="Mizoguchi H."/>
            <person name="Goto Y."/>
            <person name="Shimizu F."/>
            <person name="Wakebe H."/>
            <person name="Hishigaki H."/>
            <person name="Watanabe T."/>
            <person name="Sugiyama A."/>
            <person name="Takemoto M."/>
            <person name="Kawakami B."/>
            <person name="Yamazaki M."/>
            <person name="Watanabe K."/>
            <person name="Kumagai A."/>
            <person name="Itakura S."/>
            <person name="Fukuzumi Y."/>
            <person name="Fujimori Y."/>
            <person name="Komiyama M."/>
            <person name="Tashiro H."/>
            <person name="Tanigami A."/>
            <person name="Fujiwara T."/>
            <person name="Ono T."/>
            <person name="Yamada K."/>
            <person name="Fujii Y."/>
            <person name="Ozaki K."/>
            <person name="Hirao M."/>
            <person name="Ohmori Y."/>
            <person name="Kawabata A."/>
            <person name="Hikiji T."/>
            <person name="Kobatake N."/>
            <person name="Inagaki H."/>
            <person name="Ikema Y."/>
            <person name="Okamoto S."/>
            <person name="Okitani R."/>
            <person name="Kawakami T."/>
            <person name="Noguchi S."/>
            <person name="Itoh T."/>
            <person name="Shigeta K."/>
            <person name="Senba T."/>
            <person name="Matsumura K."/>
            <person name="Nakajima Y."/>
            <person name="Mizuno T."/>
            <person name="Morinaga M."/>
            <person name="Sasaki M."/>
            <person name="Togashi T."/>
            <person name="Oyama M."/>
            <person name="Hata H."/>
            <person name="Watanabe M."/>
            <person name="Komatsu T."/>
            <person name="Mizushima-Sugano J."/>
            <person name="Satoh T."/>
            <person name="Shirai Y."/>
            <person name="Takahashi Y."/>
            <person name="Nakagawa K."/>
            <person name="Okumura K."/>
            <person name="Nagase T."/>
            <person name="Nomura N."/>
            <person name="Kikuchi H."/>
            <person name="Masuho Y."/>
            <person name="Yamashita R."/>
            <person name="Nakai K."/>
            <person name="Yada T."/>
            <person name="Nakamura Y."/>
            <person name="Ohara O."/>
            <person name="Isogai T."/>
            <person name="Sugano S."/>
        </authorList>
    </citation>
    <scope>NUCLEOTIDE SEQUENCE [LARGE SCALE MRNA] (ISOFORMS 1 AND 2)</scope>
    <source>
        <tissue>Brain</tissue>
        <tissue>Esophagus</tissue>
    </source>
</reference>
<reference key="2">
    <citation type="journal article" date="2004" name="Nature">
        <title>The DNA sequence and biology of human chromosome 19.</title>
        <authorList>
            <person name="Grimwood J."/>
            <person name="Gordon L.A."/>
            <person name="Olsen A.S."/>
            <person name="Terry A."/>
            <person name="Schmutz J."/>
            <person name="Lamerdin J.E."/>
            <person name="Hellsten U."/>
            <person name="Goodstein D."/>
            <person name="Couronne O."/>
            <person name="Tran-Gyamfi M."/>
            <person name="Aerts A."/>
            <person name="Altherr M."/>
            <person name="Ashworth L."/>
            <person name="Bajorek E."/>
            <person name="Black S."/>
            <person name="Branscomb E."/>
            <person name="Caenepeel S."/>
            <person name="Carrano A.V."/>
            <person name="Caoile C."/>
            <person name="Chan Y.M."/>
            <person name="Christensen M."/>
            <person name="Cleland C.A."/>
            <person name="Copeland A."/>
            <person name="Dalin E."/>
            <person name="Dehal P."/>
            <person name="Denys M."/>
            <person name="Detter J.C."/>
            <person name="Escobar J."/>
            <person name="Flowers D."/>
            <person name="Fotopulos D."/>
            <person name="Garcia C."/>
            <person name="Georgescu A.M."/>
            <person name="Glavina T."/>
            <person name="Gomez M."/>
            <person name="Gonzales E."/>
            <person name="Groza M."/>
            <person name="Hammon N."/>
            <person name="Hawkins T."/>
            <person name="Haydu L."/>
            <person name="Ho I."/>
            <person name="Huang W."/>
            <person name="Israni S."/>
            <person name="Jett J."/>
            <person name="Kadner K."/>
            <person name="Kimball H."/>
            <person name="Kobayashi A."/>
            <person name="Larionov V."/>
            <person name="Leem S.-H."/>
            <person name="Lopez F."/>
            <person name="Lou Y."/>
            <person name="Lowry S."/>
            <person name="Malfatti S."/>
            <person name="Martinez D."/>
            <person name="McCready P.M."/>
            <person name="Medina C."/>
            <person name="Morgan J."/>
            <person name="Nelson K."/>
            <person name="Nolan M."/>
            <person name="Ovcharenko I."/>
            <person name="Pitluck S."/>
            <person name="Pollard M."/>
            <person name="Popkie A.P."/>
            <person name="Predki P."/>
            <person name="Quan G."/>
            <person name="Ramirez L."/>
            <person name="Rash S."/>
            <person name="Retterer J."/>
            <person name="Rodriguez A."/>
            <person name="Rogers S."/>
            <person name="Salamov A."/>
            <person name="Salazar A."/>
            <person name="She X."/>
            <person name="Smith D."/>
            <person name="Slezak T."/>
            <person name="Solovyev V."/>
            <person name="Thayer N."/>
            <person name="Tice H."/>
            <person name="Tsai M."/>
            <person name="Ustaszewska A."/>
            <person name="Vo N."/>
            <person name="Wagner M."/>
            <person name="Wheeler J."/>
            <person name="Wu K."/>
            <person name="Xie G."/>
            <person name="Yang J."/>
            <person name="Dubchak I."/>
            <person name="Furey T.S."/>
            <person name="DeJong P."/>
            <person name="Dickson M."/>
            <person name="Gordon D."/>
            <person name="Eichler E.E."/>
            <person name="Pennacchio L.A."/>
            <person name="Richardson P."/>
            <person name="Stubbs L."/>
            <person name="Rokhsar D.S."/>
            <person name="Myers R.M."/>
            <person name="Rubin E.M."/>
            <person name="Lucas S.M."/>
        </authorList>
    </citation>
    <scope>NUCLEOTIDE SEQUENCE [LARGE SCALE GENOMIC DNA]</scope>
</reference>
<reference key="3">
    <citation type="submission" date="2005-07" db="EMBL/GenBank/DDBJ databases">
        <authorList>
            <person name="Mural R.J."/>
            <person name="Istrail S."/>
            <person name="Sutton G.G."/>
            <person name="Florea L."/>
            <person name="Halpern A.L."/>
            <person name="Mobarry C.M."/>
            <person name="Lippert R."/>
            <person name="Walenz B."/>
            <person name="Shatkay H."/>
            <person name="Dew I."/>
            <person name="Miller J.R."/>
            <person name="Flanigan M.J."/>
            <person name="Edwards N.J."/>
            <person name="Bolanos R."/>
            <person name="Fasulo D."/>
            <person name="Halldorsson B.V."/>
            <person name="Hannenhalli S."/>
            <person name="Turner R."/>
            <person name="Yooseph S."/>
            <person name="Lu F."/>
            <person name="Nusskern D.R."/>
            <person name="Shue B.C."/>
            <person name="Zheng X.H."/>
            <person name="Zhong F."/>
            <person name="Delcher A.L."/>
            <person name="Huson D.H."/>
            <person name="Kravitz S.A."/>
            <person name="Mouchard L."/>
            <person name="Reinert K."/>
            <person name="Remington K.A."/>
            <person name="Clark A.G."/>
            <person name="Waterman M.S."/>
            <person name="Eichler E.E."/>
            <person name="Adams M.D."/>
            <person name="Hunkapiller M.W."/>
            <person name="Myers E.W."/>
            <person name="Venter J.C."/>
        </authorList>
    </citation>
    <scope>NUCLEOTIDE SEQUENCE [LARGE SCALE GENOMIC DNA]</scope>
</reference>
<reference key="4">
    <citation type="journal article" date="2004" name="Genome Res.">
        <title>The status, quality, and expansion of the NIH full-length cDNA project: the Mammalian Gene Collection (MGC).</title>
        <authorList>
            <consortium name="The MGC Project Team"/>
        </authorList>
    </citation>
    <scope>NUCLEOTIDE SEQUENCE [LARGE SCALE MRNA] (ISOFORM 1)</scope>
    <source>
        <tissue>Cervix</tissue>
    </source>
</reference>
<accession>Q96NG5</accession>
<accession>A8K5F0</accession>
<accession>B7Z798</accession>
<gene>
    <name type="primary">ZNF558</name>
</gene>